<evidence type="ECO:0000255" key="1">
    <source>
        <dbReference type="HAMAP-Rule" id="MF_01343"/>
    </source>
</evidence>
<evidence type="ECO:0000305" key="2"/>
<feature type="chain" id="PRO_1000054787" description="Small ribosomal subunit protein uS15">
    <location>
        <begin position="1"/>
        <end position="88"/>
    </location>
</feature>
<keyword id="KW-0687">Ribonucleoprotein</keyword>
<keyword id="KW-0689">Ribosomal protein</keyword>
<keyword id="KW-0694">RNA-binding</keyword>
<keyword id="KW-0699">rRNA-binding</keyword>
<name>RS15_FRATW</name>
<gene>
    <name evidence="1" type="primary">rpsO</name>
    <name type="ordered locus">FTW_1545</name>
</gene>
<comment type="function">
    <text evidence="1">One of the primary rRNA binding proteins, it binds directly to 16S rRNA where it helps nucleate assembly of the platform of the 30S subunit by binding and bridging several RNA helices of the 16S rRNA.</text>
</comment>
<comment type="function">
    <text evidence="1">Forms an intersubunit bridge (bridge B4) with the 23S rRNA of the 50S subunit in the ribosome.</text>
</comment>
<comment type="subunit">
    <text evidence="1">Part of the 30S ribosomal subunit. Forms a bridge to the 50S subunit in the 70S ribosome, contacting the 23S rRNA.</text>
</comment>
<comment type="similarity">
    <text evidence="1">Belongs to the universal ribosomal protein uS15 family.</text>
</comment>
<sequence length="88" mass="10359">MLTAQDKQKIIKENQLAESDTGSPEVQVALLTARINDLQGHFEAHKKDNHSRRGLLRLVSQRRKLLDYLHDKDVERYRSLIKKLNIRR</sequence>
<organism>
    <name type="scientific">Francisella tularensis subsp. tularensis (strain WY96-3418)</name>
    <dbReference type="NCBI Taxonomy" id="418136"/>
    <lineage>
        <taxon>Bacteria</taxon>
        <taxon>Pseudomonadati</taxon>
        <taxon>Pseudomonadota</taxon>
        <taxon>Gammaproteobacteria</taxon>
        <taxon>Thiotrichales</taxon>
        <taxon>Francisellaceae</taxon>
        <taxon>Francisella</taxon>
    </lineage>
</organism>
<proteinExistence type="inferred from homology"/>
<protein>
    <recommendedName>
        <fullName evidence="1">Small ribosomal subunit protein uS15</fullName>
    </recommendedName>
    <alternativeName>
        <fullName evidence="2">30S ribosomal protein S15</fullName>
    </alternativeName>
</protein>
<reference key="1">
    <citation type="journal article" date="2007" name="PLoS ONE">
        <title>Complete genomic characterization of a pathogenic A.II strain of Francisella tularensis subspecies tularensis.</title>
        <authorList>
            <person name="Beckstrom-Sternberg S.M."/>
            <person name="Auerbach R.K."/>
            <person name="Godbole S."/>
            <person name="Pearson J.V."/>
            <person name="Beckstrom-Sternberg J.S."/>
            <person name="Deng Z."/>
            <person name="Munk C."/>
            <person name="Kubota K."/>
            <person name="Zhou Y."/>
            <person name="Bruce D."/>
            <person name="Noronha J."/>
            <person name="Scheuermann R.H."/>
            <person name="Wang A."/>
            <person name="Wei X."/>
            <person name="Wang J."/>
            <person name="Hao J."/>
            <person name="Wagner D.M."/>
            <person name="Brettin T.S."/>
            <person name="Brown N."/>
            <person name="Gilna P."/>
            <person name="Keim P.S."/>
        </authorList>
    </citation>
    <scope>NUCLEOTIDE SEQUENCE [LARGE SCALE GENOMIC DNA]</scope>
    <source>
        <strain>WY96-3418</strain>
    </source>
</reference>
<accession>A4IZA7</accession>
<dbReference type="EMBL" id="CP000608">
    <property type="protein sequence ID" value="ABO47257.1"/>
    <property type="molecule type" value="Genomic_DNA"/>
</dbReference>
<dbReference type="RefSeq" id="WP_003020499.1">
    <property type="nucleotide sequence ID" value="NC_009257.1"/>
</dbReference>
<dbReference type="SMR" id="A4IZA7"/>
<dbReference type="KEGG" id="ftw:FTW_1545"/>
<dbReference type="HOGENOM" id="CLU_148518_0_0_6"/>
<dbReference type="GO" id="GO:0022627">
    <property type="term" value="C:cytosolic small ribosomal subunit"/>
    <property type="evidence" value="ECO:0007669"/>
    <property type="project" value="TreeGrafter"/>
</dbReference>
<dbReference type="GO" id="GO:0019843">
    <property type="term" value="F:rRNA binding"/>
    <property type="evidence" value="ECO:0007669"/>
    <property type="project" value="UniProtKB-UniRule"/>
</dbReference>
<dbReference type="GO" id="GO:0003735">
    <property type="term" value="F:structural constituent of ribosome"/>
    <property type="evidence" value="ECO:0007669"/>
    <property type="project" value="InterPro"/>
</dbReference>
<dbReference type="GO" id="GO:0006412">
    <property type="term" value="P:translation"/>
    <property type="evidence" value="ECO:0007669"/>
    <property type="project" value="UniProtKB-UniRule"/>
</dbReference>
<dbReference type="CDD" id="cd00353">
    <property type="entry name" value="Ribosomal_S15p_S13e"/>
    <property type="match status" value="1"/>
</dbReference>
<dbReference type="FunFam" id="1.10.287.10:FF:000002">
    <property type="entry name" value="30S ribosomal protein S15"/>
    <property type="match status" value="1"/>
</dbReference>
<dbReference type="Gene3D" id="6.10.250.3130">
    <property type="match status" value="1"/>
</dbReference>
<dbReference type="Gene3D" id="1.10.287.10">
    <property type="entry name" value="S15/NS1, RNA-binding"/>
    <property type="match status" value="1"/>
</dbReference>
<dbReference type="HAMAP" id="MF_01343_B">
    <property type="entry name" value="Ribosomal_uS15_B"/>
    <property type="match status" value="1"/>
</dbReference>
<dbReference type="InterPro" id="IPR000589">
    <property type="entry name" value="Ribosomal_uS15"/>
</dbReference>
<dbReference type="InterPro" id="IPR005290">
    <property type="entry name" value="Ribosomal_uS15_bac-type"/>
</dbReference>
<dbReference type="InterPro" id="IPR009068">
    <property type="entry name" value="uS15_NS1_RNA-bd_sf"/>
</dbReference>
<dbReference type="NCBIfam" id="TIGR00952">
    <property type="entry name" value="S15_bact"/>
    <property type="match status" value="1"/>
</dbReference>
<dbReference type="PANTHER" id="PTHR23321">
    <property type="entry name" value="RIBOSOMAL PROTEIN S15, BACTERIAL AND ORGANELLAR"/>
    <property type="match status" value="1"/>
</dbReference>
<dbReference type="PANTHER" id="PTHR23321:SF26">
    <property type="entry name" value="SMALL RIBOSOMAL SUBUNIT PROTEIN US15M"/>
    <property type="match status" value="1"/>
</dbReference>
<dbReference type="Pfam" id="PF00312">
    <property type="entry name" value="Ribosomal_S15"/>
    <property type="match status" value="1"/>
</dbReference>
<dbReference type="SMART" id="SM01387">
    <property type="entry name" value="Ribosomal_S15"/>
    <property type="match status" value="1"/>
</dbReference>
<dbReference type="SUPFAM" id="SSF47060">
    <property type="entry name" value="S15/NS1 RNA-binding domain"/>
    <property type="match status" value="1"/>
</dbReference>
<dbReference type="PROSITE" id="PS00362">
    <property type="entry name" value="RIBOSOMAL_S15"/>
    <property type="match status" value="1"/>
</dbReference>